<keyword id="KW-0378">Hydrolase</keyword>
<keyword id="KW-0441">Lipid A biosynthesis</keyword>
<keyword id="KW-0444">Lipid biosynthesis</keyword>
<keyword id="KW-0443">Lipid metabolism</keyword>
<keyword id="KW-0479">Metal-binding</keyword>
<keyword id="KW-0862">Zinc</keyword>
<reference key="1">
    <citation type="journal article" date="2010" name="Genome Biol. Evol.">
        <title>Continuing evolution of Burkholderia mallei through genome reduction and large-scale rearrangements.</title>
        <authorList>
            <person name="Losada L."/>
            <person name="Ronning C.M."/>
            <person name="DeShazer D."/>
            <person name="Woods D."/>
            <person name="Fedorova N."/>
            <person name="Kim H.S."/>
            <person name="Shabalina S.A."/>
            <person name="Pearson T.R."/>
            <person name="Brinkac L."/>
            <person name="Tan P."/>
            <person name="Nandi T."/>
            <person name="Crabtree J."/>
            <person name="Badger J."/>
            <person name="Beckstrom-Sternberg S."/>
            <person name="Saqib M."/>
            <person name="Schutzer S.E."/>
            <person name="Keim P."/>
            <person name="Nierman W.C."/>
        </authorList>
    </citation>
    <scope>NUCLEOTIDE SEQUENCE [LARGE SCALE GENOMIC DNA]</scope>
    <source>
        <strain>NCTC 10229</strain>
    </source>
</reference>
<sequence length="305" mass="33526">MLKQRTIKSIVKTVGIGVHSGRKVELTLRPAAPDTGIVFSRVDLPTPVDIPASALSIGDTRLASVLQKDGVRVSTVEHLMSACAGLGIDNLYVDVTAEEIPIMDGSAATFVFLIQSAGIEEQNAAKKFIKVTKPVEIRDGDKFARLDPYFGFKLKFTIDFRHPAVDKTGQELEVDFANTSYVREIARARTFGFAHEVEMMRELGLARGGSMDNAIVLDEYRILNNDGLRYDDEFVKHKMLDAIGDLYVIGHPLLASYTAYKSGHGLNNALLRELLAHEQAYEIVTFDDPKTAPTGFGFDAQTAFA</sequence>
<name>LPXC_BURM9</name>
<organism>
    <name type="scientific">Burkholderia mallei (strain NCTC 10229)</name>
    <dbReference type="NCBI Taxonomy" id="412022"/>
    <lineage>
        <taxon>Bacteria</taxon>
        <taxon>Pseudomonadati</taxon>
        <taxon>Pseudomonadota</taxon>
        <taxon>Betaproteobacteria</taxon>
        <taxon>Burkholderiales</taxon>
        <taxon>Burkholderiaceae</taxon>
        <taxon>Burkholderia</taxon>
        <taxon>pseudomallei group</taxon>
    </lineage>
</organism>
<accession>A2S5T7</accession>
<dbReference type="EC" id="3.5.1.108" evidence="1"/>
<dbReference type="EMBL" id="CP000546">
    <property type="protein sequence ID" value="ABN02012.1"/>
    <property type="molecule type" value="Genomic_DNA"/>
</dbReference>
<dbReference type="RefSeq" id="WP_004194158.1">
    <property type="nucleotide sequence ID" value="NC_008836.1"/>
</dbReference>
<dbReference type="SMR" id="A2S5T7"/>
<dbReference type="GeneID" id="93061620"/>
<dbReference type="KEGG" id="bml:BMA10229_A1323"/>
<dbReference type="HOGENOM" id="CLU_046528_1_0_4"/>
<dbReference type="UniPathway" id="UPA00359">
    <property type="reaction ID" value="UER00478"/>
</dbReference>
<dbReference type="Proteomes" id="UP000002283">
    <property type="component" value="Chromosome I"/>
</dbReference>
<dbReference type="GO" id="GO:0016020">
    <property type="term" value="C:membrane"/>
    <property type="evidence" value="ECO:0007669"/>
    <property type="project" value="GOC"/>
</dbReference>
<dbReference type="GO" id="GO:0046872">
    <property type="term" value="F:metal ion binding"/>
    <property type="evidence" value="ECO:0007669"/>
    <property type="project" value="UniProtKB-KW"/>
</dbReference>
<dbReference type="GO" id="GO:0103117">
    <property type="term" value="F:UDP-3-O-acyl-N-acetylglucosamine deacetylase activity"/>
    <property type="evidence" value="ECO:0007669"/>
    <property type="project" value="UniProtKB-UniRule"/>
</dbReference>
<dbReference type="GO" id="GO:0009245">
    <property type="term" value="P:lipid A biosynthetic process"/>
    <property type="evidence" value="ECO:0007669"/>
    <property type="project" value="UniProtKB-UniRule"/>
</dbReference>
<dbReference type="Gene3D" id="3.30.230.20">
    <property type="entry name" value="lpxc deacetylase, domain 1"/>
    <property type="match status" value="1"/>
</dbReference>
<dbReference type="Gene3D" id="3.30.1700.10">
    <property type="entry name" value="lpxc deacetylase, domain 2"/>
    <property type="match status" value="1"/>
</dbReference>
<dbReference type="HAMAP" id="MF_00388">
    <property type="entry name" value="LpxC"/>
    <property type="match status" value="1"/>
</dbReference>
<dbReference type="InterPro" id="IPR020568">
    <property type="entry name" value="Ribosomal_Su5_D2-typ_SF"/>
</dbReference>
<dbReference type="InterPro" id="IPR004463">
    <property type="entry name" value="UDP-acyl_GlcNac_deAcase"/>
</dbReference>
<dbReference type="InterPro" id="IPR011334">
    <property type="entry name" value="UDP-acyl_GlcNac_deAcase_C"/>
</dbReference>
<dbReference type="InterPro" id="IPR015870">
    <property type="entry name" value="UDP-acyl_N-AcGlcN_deAcase_N"/>
</dbReference>
<dbReference type="NCBIfam" id="TIGR00325">
    <property type="entry name" value="lpxC"/>
    <property type="match status" value="1"/>
</dbReference>
<dbReference type="PANTHER" id="PTHR33694">
    <property type="entry name" value="UDP-3-O-ACYL-N-ACETYLGLUCOSAMINE DEACETYLASE 1, MITOCHONDRIAL-RELATED"/>
    <property type="match status" value="1"/>
</dbReference>
<dbReference type="PANTHER" id="PTHR33694:SF1">
    <property type="entry name" value="UDP-3-O-ACYL-N-ACETYLGLUCOSAMINE DEACETYLASE 1, MITOCHONDRIAL-RELATED"/>
    <property type="match status" value="1"/>
</dbReference>
<dbReference type="Pfam" id="PF03331">
    <property type="entry name" value="LpxC"/>
    <property type="match status" value="1"/>
</dbReference>
<dbReference type="SUPFAM" id="SSF54211">
    <property type="entry name" value="Ribosomal protein S5 domain 2-like"/>
    <property type="match status" value="2"/>
</dbReference>
<proteinExistence type="inferred from homology"/>
<comment type="function">
    <text evidence="1">Catalyzes the hydrolysis of UDP-3-O-myristoyl-N-acetylglucosamine to form UDP-3-O-myristoylglucosamine and acetate, the committed step in lipid A biosynthesis.</text>
</comment>
<comment type="catalytic activity">
    <reaction evidence="1">
        <text>a UDP-3-O-[(3R)-3-hydroxyacyl]-N-acetyl-alpha-D-glucosamine + H2O = a UDP-3-O-[(3R)-3-hydroxyacyl]-alpha-D-glucosamine + acetate</text>
        <dbReference type="Rhea" id="RHEA:67816"/>
        <dbReference type="ChEBI" id="CHEBI:15377"/>
        <dbReference type="ChEBI" id="CHEBI:30089"/>
        <dbReference type="ChEBI" id="CHEBI:137740"/>
        <dbReference type="ChEBI" id="CHEBI:173225"/>
        <dbReference type="EC" id="3.5.1.108"/>
    </reaction>
</comment>
<comment type="cofactor">
    <cofactor evidence="1">
        <name>Zn(2+)</name>
        <dbReference type="ChEBI" id="CHEBI:29105"/>
    </cofactor>
</comment>
<comment type="pathway">
    <text evidence="1">Glycolipid biosynthesis; lipid IV(A) biosynthesis; lipid IV(A) from (3R)-3-hydroxytetradecanoyl-[acyl-carrier-protein] and UDP-N-acetyl-alpha-D-glucosamine: step 2/6.</text>
</comment>
<comment type="similarity">
    <text evidence="1">Belongs to the LpxC family.</text>
</comment>
<feature type="chain" id="PRO_1000013193" description="UDP-3-O-acyl-N-acetylglucosamine deacetylase">
    <location>
        <begin position="1"/>
        <end position="305"/>
    </location>
</feature>
<feature type="active site" description="Proton donor" evidence="1">
    <location>
        <position position="264"/>
    </location>
</feature>
<feature type="binding site" evidence="1">
    <location>
        <position position="78"/>
    </location>
    <ligand>
        <name>Zn(2+)</name>
        <dbReference type="ChEBI" id="CHEBI:29105"/>
    </ligand>
</feature>
<feature type="binding site" evidence="1">
    <location>
        <position position="237"/>
    </location>
    <ligand>
        <name>Zn(2+)</name>
        <dbReference type="ChEBI" id="CHEBI:29105"/>
    </ligand>
</feature>
<feature type="binding site" evidence="1">
    <location>
        <position position="241"/>
    </location>
    <ligand>
        <name>Zn(2+)</name>
        <dbReference type="ChEBI" id="CHEBI:29105"/>
    </ligand>
</feature>
<gene>
    <name evidence="1" type="primary">lpxC</name>
    <name type="ordered locus">BMA10229_A1323</name>
</gene>
<evidence type="ECO:0000255" key="1">
    <source>
        <dbReference type="HAMAP-Rule" id="MF_00388"/>
    </source>
</evidence>
<protein>
    <recommendedName>
        <fullName evidence="1">UDP-3-O-acyl-N-acetylglucosamine deacetylase</fullName>
        <shortName evidence="1">UDP-3-O-acyl-GlcNAc deacetylase</shortName>
        <ecNumber evidence="1">3.5.1.108</ecNumber>
    </recommendedName>
    <alternativeName>
        <fullName evidence="1">UDP-3-O-[R-3-hydroxymyristoyl]-N-acetylglucosamine deacetylase</fullName>
    </alternativeName>
</protein>